<sequence>MMKLIQLCILFWCWRAICCHSCELTNITISVEKEECRFCISINTTWCAGYCYTRDLVYKDPARPNTQKVCTFKELVYETVRLPGCARHSDSLYTYPVATECHCGKCDSDSTDCTVRGLGPSYCSFSEMKE</sequence>
<keyword id="KW-1015">Disulfide bond</keyword>
<keyword id="KW-0325">Glycoprotein</keyword>
<keyword id="KW-0372">Hormone</keyword>
<keyword id="KW-1185">Reference proteome</keyword>
<keyword id="KW-0964">Secreted</keyword>
<keyword id="KW-0732">Signal</keyword>
<proteinExistence type="evidence at transcript level"/>
<gene>
    <name type="primary">Fshb</name>
</gene>
<dbReference type="EMBL" id="U12932">
    <property type="protein sequence ID" value="AAA92804.1"/>
    <property type="molecule type" value="Genomic_DNA"/>
</dbReference>
<dbReference type="EMBL" id="AK017593">
    <property type="protein sequence ID" value="BAB30827.1"/>
    <property type="molecule type" value="mRNA"/>
</dbReference>
<dbReference type="EMBL" id="BC061159">
    <property type="protein sequence ID" value="AAH61159.1"/>
    <property type="molecule type" value="mRNA"/>
</dbReference>
<dbReference type="CCDS" id="CCDS16504.1"/>
<dbReference type="PIR" id="JC4526">
    <property type="entry name" value="JC4526"/>
</dbReference>
<dbReference type="RefSeq" id="NP_032071.1">
    <property type="nucleotide sequence ID" value="NM_008045.3"/>
</dbReference>
<dbReference type="SMR" id="Q60687"/>
<dbReference type="FunCoup" id="Q60687">
    <property type="interactions" value="668"/>
</dbReference>
<dbReference type="STRING" id="10090.ENSMUSP00000028533"/>
<dbReference type="GlyCosmos" id="Q60687">
    <property type="glycosylation" value="2 sites, No reported glycans"/>
</dbReference>
<dbReference type="GlyGen" id="Q60687">
    <property type="glycosylation" value="2 sites"/>
</dbReference>
<dbReference type="PhosphoSitePlus" id="Q60687"/>
<dbReference type="PaxDb" id="10090-ENSMUSP00000028533"/>
<dbReference type="Antibodypedia" id="12775">
    <property type="antibodies" value="1031 antibodies from 39 providers"/>
</dbReference>
<dbReference type="DNASU" id="14308"/>
<dbReference type="Ensembl" id="ENSMUST00000028533.7">
    <property type="protein sequence ID" value="ENSMUSP00000028533.7"/>
    <property type="gene ID" value="ENSMUSG00000027120.7"/>
</dbReference>
<dbReference type="GeneID" id="14308"/>
<dbReference type="KEGG" id="mmu:14308"/>
<dbReference type="UCSC" id="uc008llt.1">
    <property type="organism name" value="mouse"/>
</dbReference>
<dbReference type="AGR" id="MGI:95582"/>
<dbReference type="CTD" id="2488"/>
<dbReference type="MGI" id="MGI:95582">
    <property type="gene designation" value="Fshb"/>
</dbReference>
<dbReference type="VEuPathDB" id="HostDB:ENSMUSG00000027120"/>
<dbReference type="eggNOG" id="ENOG502S39C">
    <property type="taxonomic scope" value="Eukaryota"/>
</dbReference>
<dbReference type="GeneTree" id="ENSGT00940000160051"/>
<dbReference type="HOGENOM" id="CLU_126319_3_0_1"/>
<dbReference type="InParanoid" id="Q60687"/>
<dbReference type="OMA" id="PVATGCH"/>
<dbReference type="OrthoDB" id="8453657at2759"/>
<dbReference type="PhylomeDB" id="Q60687"/>
<dbReference type="TreeFam" id="TF332940"/>
<dbReference type="Reactome" id="R-MMU-209822">
    <property type="pathway name" value="Glycoprotein hormones"/>
</dbReference>
<dbReference type="Reactome" id="R-MMU-375281">
    <property type="pathway name" value="Hormone ligand-binding receptors"/>
</dbReference>
<dbReference type="Reactome" id="R-MMU-418555">
    <property type="pathway name" value="G alpha (s) signalling events"/>
</dbReference>
<dbReference type="BioGRID-ORCS" id="14308">
    <property type="hits" value="1 hit in 77 CRISPR screens"/>
</dbReference>
<dbReference type="PRO" id="PR:Q60687"/>
<dbReference type="Proteomes" id="UP000000589">
    <property type="component" value="Chromosome 2"/>
</dbReference>
<dbReference type="RNAct" id="Q60687">
    <property type="molecule type" value="protein"/>
</dbReference>
<dbReference type="Bgee" id="ENSMUSG00000027120">
    <property type="expression patterns" value="Expressed in pituitary gland and 10 other cell types or tissues"/>
</dbReference>
<dbReference type="ExpressionAtlas" id="Q60687">
    <property type="expression patterns" value="baseline and differential"/>
</dbReference>
<dbReference type="GO" id="GO:0005737">
    <property type="term" value="C:cytoplasm"/>
    <property type="evidence" value="ECO:0000314"/>
    <property type="project" value="MGI"/>
</dbReference>
<dbReference type="GO" id="GO:0005615">
    <property type="term" value="C:extracellular space"/>
    <property type="evidence" value="ECO:0000250"/>
    <property type="project" value="UniProtKB"/>
</dbReference>
<dbReference type="GO" id="GO:0016914">
    <property type="term" value="C:follicle-stimulating hormone complex"/>
    <property type="evidence" value="ECO:0000250"/>
    <property type="project" value="UniProtKB"/>
</dbReference>
<dbReference type="GO" id="GO:0016913">
    <property type="term" value="F:follicle-stimulating hormone activity"/>
    <property type="evidence" value="ECO:0000250"/>
    <property type="project" value="UniProtKB"/>
</dbReference>
<dbReference type="GO" id="GO:0042699">
    <property type="term" value="P:follicle-stimulating hormone signaling pathway"/>
    <property type="evidence" value="ECO:0000315"/>
    <property type="project" value="MGI"/>
</dbReference>
<dbReference type="GO" id="GO:0007186">
    <property type="term" value="P:G protein-coupled receptor signaling pathway"/>
    <property type="evidence" value="ECO:0000250"/>
    <property type="project" value="UniProtKB"/>
</dbReference>
<dbReference type="GO" id="GO:0001541">
    <property type="term" value="P:ovarian follicle development"/>
    <property type="evidence" value="ECO:0000315"/>
    <property type="project" value="MGI"/>
</dbReference>
<dbReference type="GO" id="GO:0045780">
    <property type="term" value="P:positive regulation of bone resorption"/>
    <property type="evidence" value="ECO:0000315"/>
    <property type="project" value="MGI"/>
</dbReference>
<dbReference type="GO" id="GO:0010628">
    <property type="term" value="P:positive regulation of gene expression"/>
    <property type="evidence" value="ECO:0000314"/>
    <property type="project" value="MGI"/>
</dbReference>
<dbReference type="GO" id="GO:0010893">
    <property type="term" value="P:positive regulation of steroid biosynthetic process"/>
    <property type="evidence" value="ECO:0007669"/>
    <property type="project" value="Ensembl"/>
</dbReference>
<dbReference type="GO" id="GO:0045670">
    <property type="term" value="P:regulation of osteoclast differentiation"/>
    <property type="evidence" value="ECO:0000315"/>
    <property type="project" value="MGI"/>
</dbReference>
<dbReference type="GO" id="GO:0010469">
    <property type="term" value="P:regulation of signaling receptor activity"/>
    <property type="evidence" value="ECO:0000250"/>
    <property type="project" value="UniProtKB"/>
</dbReference>
<dbReference type="GO" id="GO:0060011">
    <property type="term" value="P:Sertoli cell proliferation"/>
    <property type="evidence" value="ECO:0000315"/>
    <property type="project" value="MGI"/>
</dbReference>
<dbReference type="GO" id="GO:0007283">
    <property type="term" value="P:spermatogenesis"/>
    <property type="evidence" value="ECO:0000316"/>
    <property type="project" value="MGI"/>
</dbReference>
<dbReference type="GO" id="GO:0007179">
    <property type="term" value="P:transforming growth factor beta receptor signaling pathway"/>
    <property type="evidence" value="ECO:0007669"/>
    <property type="project" value="Ensembl"/>
</dbReference>
<dbReference type="CDD" id="cd00069">
    <property type="entry name" value="GHB_like"/>
    <property type="match status" value="1"/>
</dbReference>
<dbReference type="FunFam" id="2.10.90.10:FF:000007">
    <property type="entry name" value="Luteinizing hormone beta subunit"/>
    <property type="match status" value="1"/>
</dbReference>
<dbReference type="Gene3D" id="2.10.90.10">
    <property type="entry name" value="Cystine-knot cytokines"/>
    <property type="match status" value="1"/>
</dbReference>
<dbReference type="InterPro" id="IPR029034">
    <property type="entry name" value="Cystine-knot_cytokine"/>
</dbReference>
<dbReference type="InterPro" id="IPR006208">
    <property type="entry name" value="Glyco_hormone_CN"/>
</dbReference>
<dbReference type="InterPro" id="IPR001545">
    <property type="entry name" value="Gonadotropin_bsu"/>
</dbReference>
<dbReference type="InterPro" id="IPR018245">
    <property type="entry name" value="Gonadotropin_bsu_CS"/>
</dbReference>
<dbReference type="PANTHER" id="PTHR11515:SF17">
    <property type="entry name" value="FOLLITROPIN SUBUNIT BETA"/>
    <property type="match status" value="1"/>
</dbReference>
<dbReference type="PANTHER" id="PTHR11515">
    <property type="entry name" value="GLYCOPROTEIN HORMONE BETA CHAIN"/>
    <property type="match status" value="1"/>
</dbReference>
<dbReference type="Pfam" id="PF00007">
    <property type="entry name" value="Cys_knot"/>
    <property type="match status" value="1"/>
</dbReference>
<dbReference type="SMART" id="SM00068">
    <property type="entry name" value="GHB"/>
    <property type="match status" value="1"/>
</dbReference>
<dbReference type="SUPFAM" id="SSF57501">
    <property type="entry name" value="Cystine-knot cytokines"/>
    <property type="match status" value="1"/>
</dbReference>
<dbReference type="PROSITE" id="PS00261">
    <property type="entry name" value="GLYCO_HORMONE_BETA_1"/>
    <property type="match status" value="1"/>
</dbReference>
<dbReference type="PROSITE" id="PS00689">
    <property type="entry name" value="GLYCO_HORMONE_BETA_2"/>
    <property type="match status" value="1"/>
</dbReference>
<reference key="1">
    <citation type="journal article" date="1995" name="Gene">
        <title>Cloning of the mouse gonadotropin beta-subunit-encoding genes, I. Structure of the follicle-stimulating hormone beta-subunit-encoding gene.</title>
        <authorList>
            <person name="Kumar T.R."/>
            <person name="Kelly M."/>
            <person name="Mortrud M."/>
            <person name="Low M.J."/>
            <person name="Matzuk M.M."/>
        </authorList>
    </citation>
    <scope>NUCLEOTIDE SEQUENCE [GENOMIC DNA]</scope>
</reference>
<reference key="2">
    <citation type="journal article" date="2005" name="Science">
        <title>The transcriptional landscape of the mammalian genome.</title>
        <authorList>
            <person name="Carninci P."/>
            <person name="Kasukawa T."/>
            <person name="Katayama S."/>
            <person name="Gough J."/>
            <person name="Frith M.C."/>
            <person name="Maeda N."/>
            <person name="Oyama R."/>
            <person name="Ravasi T."/>
            <person name="Lenhard B."/>
            <person name="Wells C."/>
            <person name="Kodzius R."/>
            <person name="Shimokawa K."/>
            <person name="Bajic V.B."/>
            <person name="Brenner S.E."/>
            <person name="Batalov S."/>
            <person name="Forrest A.R."/>
            <person name="Zavolan M."/>
            <person name="Davis M.J."/>
            <person name="Wilming L.G."/>
            <person name="Aidinis V."/>
            <person name="Allen J.E."/>
            <person name="Ambesi-Impiombato A."/>
            <person name="Apweiler R."/>
            <person name="Aturaliya R.N."/>
            <person name="Bailey T.L."/>
            <person name="Bansal M."/>
            <person name="Baxter L."/>
            <person name="Beisel K.W."/>
            <person name="Bersano T."/>
            <person name="Bono H."/>
            <person name="Chalk A.M."/>
            <person name="Chiu K.P."/>
            <person name="Choudhary V."/>
            <person name="Christoffels A."/>
            <person name="Clutterbuck D.R."/>
            <person name="Crowe M.L."/>
            <person name="Dalla E."/>
            <person name="Dalrymple B.P."/>
            <person name="de Bono B."/>
            <person name="Della Gatta G."/>
            <person name="di Bernardo D."/>
            <person name="Down T."/>
            <person name="Engstrom P."/>
            <person name="Fagiolini M."/>
            <person name="Faulkner G."/>
            <person name="Fletcher C.F."/>
            <person name="Fukushima T."/>
            <person name="Furuno M."/>
            <person name="Futaki S."/>
            <person name="Gariboldi M."/>
            <person name="Georgii-Hemming P."/>
            <person name="Gingeras T.R."/>
            <person name="Gojobori T."/>
            <person name="Green R.E."/>
            <person name="Gustincich S."/>
            <person name="Harbers M."/>
            <person name="Hayashi Y."/>
            <person name="Hensch T.K."/>
            <person name="Hirokawa N."/>
            <person name="Hill D."/>
            <person name="Huminiecki L."/>
            <person name="Iacono M."/>
            <person name="Ikeo K."/>
            <person name="Iwama A."/>
            <person name="Ishikawa T."/>
            <person name="Jakt M."/>
            <person name="Kanapin A."/>
            <person name="Katoh M."/>
            <person name="Kawasawa Y."/>
            <person name="Kelso J."/>
            <person name="Kitamura H."/>
            <person name="Kitano H."/>
            <person name="Kollias G."/>
            <person name="Krishnan S.P."/>
            <person name="Kruger A."/>
            <person name="Kummerfeld S.K."/>
            <person name="Kurochkin I.V."/>
            <person name="Lareau L.F."/>
            <person name="Lazarevic D."/>
            <person name="Lipovich L."/>
            <person name="Liu J."/>
            <person name="Liuni S."/>
            <person name="McWilliam S."/>
            <person name="Madan Babu M."/>
            <person name="Madera M."/>
            <person name="Marchionni L."/>
            <person name="Matsuda H."/>
            <person name="Matsuzawa S."/>
            <person name="Miki H."/>
            <person name="Mignone F."/>
            <person name="Miyake S."/>
            <person name="Morris K."/>
            <person name="Mottagui-Tabar S."/>
            <person name="Mulder N."/>
            <person name="Nakano N."/>
            <person name="Nakauchi H."/>
            <person name="Ng P."/>
            <person name="Nilsson R."/>
            <person name="Nishiguchi S."/>
            <person name="Nishikawa S."/>
            <person name="Nori F."/>
            <person name="Ohara O."/>
            <person name="Okazaki Y."/>
            <person name="Orlando V."/>
            <person name="Pang K.C."/>
            <person name="Pavan W.J."/>
            <person name="Pavesi G."/>
            <person name="Pesole G."/>
            <person name="Petrovsky N."/>
            <person name="Piazza S."/>
            <person name="Reed J."/>
            <person name="Reid J.F."/>
            <person name="Ring B.Z."/>
            <person name="Ringwald M."/>
            <person name="Rost B."/>
            <person name="Ruan Y."/>
            <person name="Salzberg S.L."/>
            <person name="Sandelin A."/>
            <person name="Schneider C."/>
            <person name="Schoenbach C."/>
            <person name="Sekiguchi K."/>
            <person name="Semple C.A."/>
            <person name="Seno S."/>
            <person name="Sessa L."/>
            <person name="Sheng Y."/>
            <person name="Shibata Y."/>
            <person name="Shimada H."/>
            <person name="Shimada K."/>
            <person name="Silva D."/>
            <person name="Sinclair B."/>
            <person name="Sperling S."/>
            <person name="Stupka E."/>
            <person name="Sugiura K."/>
            <person name="Sultana R."/>
            <person name="Takenaka Y."/>
            <person name="Taki K."/>
            <person name="Tammoja K."/>
            <person name="Tan S.L."/>
            <person name="Tang S."/>
            <person name="Taylor M.S."/>
            <person name="Tegner J."/>
            <person name="Teichmann S.A."/>
            <person name="Ueda H.R."/>
            <person name="van Nimwegen E."/>
            <person name="Verardo R."/>
            <person name="Wei C.L."/>
            <person name="Yagi K."/>
            <person name="Yamanishi H."/>
            <person name="Zabarovsky E."/>
            <person name="Zhu S."/>
            <person name="Zimmer A."/>
            <person name="Hide W."/>
            <person name="Bult C."/>
            <person name="Grimmond S.M."/>
            <person name="Teasdale R.D."/>
            <person name="Liu E.T."/>
            <person name="Brusic V."/>
            <person name="Quackenbush J."/>
            <person name="Wahlestedt C."/>
            <person name="Mattick J.S."/>
            <person name="Hume D.A."/>
            <person name="Kai C."/>
            <person name="Sasaki D."/>
            <person name="Tomaru Y."/>
            <person name="Fukuda S."/>
            <person name="Kanamori-Katayama M."/>
            <person name="Suzuki M."/>
            <person name="Aoki J."/>
            <person name="Arakawa T."/>
            <person name="Iida J."/>
            <person name="Imamura K."/>
            <person name="Itoh M."/>
            <person name="Kato T."/>
            <person name="Kawaji H."/>
            <person name="Kawagashira N."/>
            <person name="Kawashima T."/>
            <person name="Kojima M."/>
            <person name="Kondo S."/>
            <person name="Konno H."/>
            <person name="Nakano K."/>
            <person name="Ninomiya N."/>
            <person name="Nishio T."/>
            <person name="Okada M."/>
            <person name="Plessy C."/>
            <person name="Shibata K."/>
            <person name="Shiraki T."/>
            <person name="Suzuki S."/>
            <person name="Tagami M."/>
            <person name="Waki K."/>
            <person name="Watahiki A."/>
            <person name="Okamura-Oho Y."/>
            <person name="Suzuki H."/>
            <person name="Kawai J."/>
            <person name="Hayashizaki Y."/>
        </authorList>
    </citation>
    <scope>NUCLEOTIDE SEQUENCE [LARGE SCALE MRNA]</scope>
    <source>
        <strain>C57BL/6J</strain>
    </source>
</reference>
<reference key="3">
    <citation type="journal article" date="2004" name="Genome Res.">
        <title>The status, quality, and expansion of the NIH full-length cDNA project: the Mammalian Gene Collection (MGC).</title>
        <authorList>
            <consortium name="The MGC Project Team"/>
        </authorList>
    </citation>
    <scope>NUCLEOTIDE SEQUENCE [LARGE SCALE MRNA]</scope>
    <source>
        <tissue>Pituitary</tissue>
    </source>
</reference>
<reference key="4">
    <citation type="journal article" date="1997" name="Nat. Genet.">
        <title>Follicle stimulating hormone is required for ovarian follicle maturation but not male fertility.</title>
        <authorList>
            <person name="Kumar T.R."/>
            <person name="Wang Y."/>
            <person name="Lu N."/>
            <person name="Matzuk M.M."/>
        </authorList>
    </citation>
    <scope>FUNCTION</scope>
    <scope>DISRUPTION PHENOTYPE</scope>
</reference>
<reference key="5">
    <citation type="journal article" date="2001" name="Endocrinology">
        <title>Analysis of the testicular phenotype of the follicle-stimulating hormone beta-subunit knockout and the activin type II receptor knockout mice by stereological analysis.</title>
        <authorList>
            <person name="Wreford N.G."/>
            <person name="Rajendra Kumar T."/>
            <person name="Matzuk M.M."/>
            <person name="de Kretser D.M."/>
        </authorList>
    </citation>
    <scope>FUNCTION</scope>
    <scope>DISRUPTION PHENOTYPE</scope>
</reference>
<reference key="6">
    <citation type="journal article" date="2013" name="Mol. Endocrinol.">
        <title>Msx1 homeodomain protein represses the alphaGSU and GnRH receptor genes during gonadotrope development.</title>
        <authorList>
            <person name="Xie H."/>
            <person name="Cherrington B.D."/>
            <person name="Meadows J.D."/>
            <person name="Witham E.A."/>
            <person name="Mellon P.L."/>
        </authorList>
    </citation>
    <scope>DEVELOPMENTAL STAGE</scope>
</reference>
<organism>
    <name type="scientific">Mus musculus</name>
    <name type="common">Mouse</name>
    <dbReference type="NCBI Taxonomy" id="10090"/>
    <lineage>
        <taxon>Eukaryota</taxon>
        <taxon>Metazoa</taxon>
        <taxon>Chordata</taxon>
        <taxon>Craniata</taxon>
        <taxon>Vertebrata</taxon>
        <taxon>Euteleostomi</taxon>
        <taxon>Mammalia</taxon>
        <taxon>Eutheria</taxon>
        <taxon>Euarchontoglires</taxon>
        <taxon>Glires</taxon>
        <taxon>Rodentia</taxon>
        <taxon>Myomorpha</taxon>
        <taxon>Muroidea</taxon>
        <taxon>Muridae</taxon>
        <taxon>Murinae</taxon>
        <taxon>Mus</taxon>
        <taxon>Mus</taxon>
    </lineage>
</organism>
<protein>
    <recommendedName>
        <fullName>Follitropin subunit beta</fullName>
    </recommendedName>
    <alternativeName>
        <fullName>Follicle-stimulating hormone beta subunit</fullName>
        <shortName>FSH-B</shortName>
        <shortName>FSH-beta</shortName>
    </alternativeName>
    <alternativeName>
        <fullName>Follitropin beta chain</fullName>
    </alternativeName>
</protein>
<name>FSHB_MOUSE</name>
<accession>Q60687</accession>
<comment type="function">
    <text evidence="2 3 5">Together with the alpha chain CGA constitutes follitropin, the follicle-stimulating hormone, and provides its biological specificity to the hormone heterodimer. Binds FSHR, a G protein-coupled receptor, on target cells to activate downstream signaling pathways (By similarity). Follitropin is involved in follicle development and spermatogenesis in reproductive organs (PubMed:11416011, PubMed:9020850).</text>
</comment>
<comment type="subunit">
    <text evidence="2">Heterodimer. The active follitropin is a heterodimer composed of an alpha chain/CGA shared with other hormones and a unique beta chain/FSHB shown here.</text>
</comment>
<comment type="subcellular location">
    <subcellularLocation>
        <location evidence="2">Secreted</location>
    </subcellularLocation>
    <text evidence="2">Efficient secretion requires dimerization with CGA.</text>
</comment>
<comment type="developmental stage">
    <text evidence="4">Expressed in the developing pituitary gland at 18.5 dpc.</text>
</comment>
<comment type="disruption phenotype">
    <text evidence="3 5">Mice lacking Fshb are viable (PubMed:9020850). Females are infertile displaying abnormal uterus and ovaries that lacked corpora lutea. The infertility is due to impaired follicle maturation which appears before antral follicle formation (PubMed:9020850). Males are fertile and spermatogenesis proceeds normally. However, these mice display a reduced testes size and epididymal sperm count (PubMed:11416011, PubMed:9020850). The number of Sertoli cells is significantly reduced and their ability to support germ cell development is also affected (PubMed:11416011).</text>
</comment>
<comment type="similarity">
    <text evidence="6">Belongs to the glycoprotein hormones subunit beta family.</text>
</comment>
<evidence type="ECO:0000250" key="1"/>
<evidence type="ECO:0000250" key="2">
    <source>
        <dbReference type="UniProtKB" id="P01225"/>
    </source>
</evidence>
<evidence type="ECO:0000269" key="3">
    <source>
    </source>
</evidence>
<evidence type="ECO:0000269" key="4">
    <source>
    </source>
</evidence>
<evidence type="ECO:0000269" key="5">
    <source>
    </source>
</evidence>
<evidence type="ECO:0000305" key="6"/>
<feature type="signal peptide" evidence="1">
    <location>
        <begin position="1"/>
        <end position="20"/>
    </location>
</feature>
<feature type="chain" id="PRO_0000011713" description="Follitropin subunit beta">
    <location>
        <begin position="21"/>
        <end position="130"/>
    </location>
</feature>
<feature type="glycosylation site" description="N-linked (GlcNAc...) asparagine" evidence="2">
    <location>
        <position position="26"/>
    </location>
</feature>
<feature type="glycosylation site" description="N-linked (GlcNAc...) asparagine" evidence="2">
    <location>
        <position position="43"/>
    </location>
</feature>
<feature type="disulfide bond" evidence="2">
    <location>
        <begin position="22"/>
        <end position="70"/>
    </location>
</feature>
<feature type="disulfide bond" evidence="2">
    <location>
        <begin position="36"/>
        <end position="85"/>
    </location>
</feature>
<feature type="disulfide bond" evidence="2">
    <location>
        <begin position="39"/>
        <end position="123"/>
    </location>
</feature>
<feature type="disulfide bond" evidence="2">
    <location>
        <begin position="47"/>
        <end position="101"/>
    </location>
</feature>
<feature type="disulfide bond" evidence="2">
    <location>
        <begin position="51"/>
        <end position="103"/>
    </location>
</feature>
<feature type="disulfide bond" evidence="2">
    <location>
        <begin position="106"/>
        <end position="113"/>
    </location>
</feature>